<protein>
    <recommendedName>
        <fullName evidence="1">Na(+)/H(+) antiporter NhaA 2</fullName>
    </recommendedName>
    <alternativeName>
        <fullName evidence="1">Sodium/proton antiporter NhaA 2</fullName>
    </alternativeName>
</protein>
<name>NHAA2_CAMJ8</name>
<feature type="chain" id="PRO_0000334264" description="Na(+)/H(+) antiporter NhaA 2">
    <location>
        <begin position="1"/>
        <end position="382"/>
    </location>
</feature>
<feature type="transmembrane region" description="Helical" evidence="1">
    <location>
        <begin position="7"/>
        <end position="27"/>
    </location>
</feature>
<feature type="transmembrane region" description="Helical" evidence="1">
    <location>
        <begin position="58"/>
        <end position="78"/>
    </location>
</feature>
<feature type="transmembrane region" description="Helical" evidence="1">
    <location>
        <begin position="94"/>
        <end position="114"/>
    </location>
</feature>
<feature type="transmembrane region" description="Helical" evidence="1">
    <location>
        <begin position="124"/>
        <end position="144"/>
    </location>
</feature>
<feature type="transmembrane region" description="Helical" evidence="1">
    <location>
        <begin position="153"/>
        <end position="173"/>
    </location>
</feature>
<feature type="transmembrane region" description="Helical" evidence="1">
    <location>
        <begin position="178"/>
        <end position="198"/>
    </location>
</feature>
<feature type="transmembrane region" description="Helical" evidence="1">
    <location>
        <begin position="199"/>
        <end position="219"/>
    </location>
</feature>
<feature type="transmembrane region" description="Helical" evidence="1">
    <location>
        <begin position="255"/>
        <end position="275"/>
    </location>
</feature>
<feature type="transmembrane region" description="Helical" evidence="1">
    <location>
        <begin position="291"/>
        <end position="311"/>
    </location>
</feature>
<feature type="transmembrane region" description="Helical" evidence="1">
    <location>
        <begin position="327"/>
        <end position="347"/>
    </location>
</feature>
<feature type="transmembrane region" description="Helical" evidence="1">
    <location>
        <begin position="361"/>
        <end position="381"/>
    </location>
</feature>
<reference key="1">
    <citation type="journal article" date="2007" name="J. Bacteriol.">
        <title>The complete genome sequence of Campylobacter jejuni strain 81116 (NCTC11828).</title>
        <authorList>
            <person name="Pearson B.M."/>
            <person name="Gaskin D.J.H."/>
            <person name="Segers R.P.A.M."/>
            <person name="Wells J.M."/>
            <person name="Nuijten P.J.M."/>
            <person name="van Vliet A.H.M."/>
        </authorList>
    </citation>
    <scope>NUCLEOTIDE SEQUENCE [LARGE SCALE GENOMIC DNA]</scope>
    <source>
        <strain>81116 / NCTC 11828</strain>
    </source>
</reference>
<dbReference type="EMBL" id="CP000814">
    <property type="protein sequence ID" value="ABV53154.1"/>
    <property type="status" value="ALT_INIT"/>
    <property type="molecule type" value="Genomic_DNA"/>
</dbReference>
<dbReference type="SMR" id="A8FNW7"/>
<dbReference type="KEGG" id="cju:C8J_1557"/>
<dbReference type="HOGENOM" id="CLU_015803_1_0_7"/>
<dbReference type="GO" id="GO:0005886">
    <property type="term" value="C:plasma membrane"/>
    <property type="evidence" value="ECO:0007669"/>
    <property type="project" value="UniProtKB-SubCell"/>
</dbReference>
<dbReference type="GO" id="GO:0015385">
    <property type="term" value="F:sodium:proton antiporter activity"/>
    <property type="evidence" value="ECO:0007669"/>
    <property type="project" value="TreeGrafter"/>
</dbReference>
<dbReference type="GO" id="GO:0006885">
    <property type="term" value="P:regulation of pH"/>
    <property type="evidence" value="ECO:0007669"/>
    <property type="project" value="InterPro"/>
</dbReference>
<dbReference type="Gene3D" id="1.20.1530.10">
    <property type="entry name" value="Na+/H+ antiporter like domain"/>
    <property type="match status" value="1"/>
</dbReference>
<dbReference type="HAMAP" id="MF_01844">
    <property type="entry name" value="NhaA"/>
    <property type="match status" value="1"/>
</dbReference>
<dbReference type="InterPro" id="IPR023171">
    <property type="entry name" value="Na/H_antiporter_dom_sf"/>
</dbReference>
<dbReference type="InterPro" id="IPR004670">
    <property type="entry name" value="NhaA"/>
</dbReference>
<dbReference type="NCBIfam" id="TIGR00773">
    <property type="entry name" value="NhaA"/>
    <property type="match status" value="1"/>
</dbReference>
<dbReference type="NCBIfam" id="NF007111">
    <property type="entry name" value="PRK09560.1"/>
    <property type="match status" value="1"/>
</dbReference>
<dbReference type="NCBIfam" id="NF007112">
    <property type="entry name" value="PRK09561.1"/>
    <property type="match status" value="1"/>
</dbReference>
<dbReference type="PANTHER" id="PTHR30341:SF0">
    <property type="entry name" value="NA(+)_H(+) ANTIPORTER NHAA"/>
    <property type="match status" value="1"/>
</dbReference>
<dbReference type="PANTHER" id="PTHR30341">
    <property type="entry name" value="SODIUM ION/PROTON ANTIPORTER NHAA-RELATED"/>
    <property type="match status" value="1"/>
</dbReference>
<dbReference type="Pfam" id="PF06965">
    <property type="entry name" value="Na_H_antiport_1"/>
    <property type="match status" value="1"/>
</dbReference>
<accession>A8FNW7</accession>
<organism>
    <name type="scientific">Campylobacter jejuni subsp. jejuni serotype O:6 (strain 81116 / NCTC 11828)</name>
    <dbReference type="NCBI Taxonomy" id="407148"/>
    <lineage>
        <taxon>Bacteria</taxon>
        <taxon>Pseudomonadati</taxon>
        <taxon>Campylobacterota</taxon>
        <taxon>Epsilonproteobacteria</taxon>
        <taxon>Campylobacterales</taxon>
        <taxon>Campylobacteraceae</taxon>
        <taxon>Campylobacter</taxon>
    </lineage>
</organism>
<gene>
    <name evidence="1" type="primary">nhaA2</name>
    <name type="ordered locus">C8J_1557</name>
</gene>
<sequence>MQMIKKMVLSETFPGILLIFFTFLALLCKNSSLSVIYTDFFHANFTVGFDHFQISKSLDLWINDGLIAIFFLCIGLELKYEILRGQLKNIRAVSLPIFGALGGMITPALIFAAINYSHDFAMKGWAIPTATDIAFAVGILMLLGNKIPTSLKLFLLSLAIFDDLGAIVIIALFYTDQLSALAIIICLFCIFALLLLNYYHITHLSLYVLVGVVLWIAMLKSGVHATLAGVIISLFIPLDTKNKKPYLHEVLKDLNPWVVYFILPLFAFANAGIDIRDMHLGSVFSPVSLGIILGLFLGKQLGVFTFCFIAIKLKLAKLPENIKYGKFYGICILTGIGFTMSLFIDGLAYKNSDIFEHADKLAILIASFLSAIVGFIYLKIVK</sequence>
<evidence type="ECO:0000255" key="1">
    <source>
        <dbReference type="HAMAP-Rule" id="MF_01844"/>
    </source>
</evidence>
<evidence type="ECO:0000305" key="2"/>
<proteinExistence type="inferred from homology"/>
<comment type="function">
    <text evidence="1">Na(+)/H(+) antiporter that extrudes sodium in exchange for external protons.</text>
</comment>
<comment type="catalytic activity">
    <reaction evidence="1">
        <text>Na(+)(in) + 2 H(+)(out) = Na(+)(out) + 2 H(+)(in)</text>
        <dbReference type="Rhea" id="RHEA:29251"/>
        <dbReference type="ChEBI" id="CHEBI:15378"/>
        <dbReference type="ChEBI" id="CHEBI:29101"/>
    </reaction>
    <physiologicalReaction direction="left-to-right" evidence="1">
        <dbReference type="Rhea" id="RHEA:29252"/>
    </physiologicalReaction>
</comment>
<comment type="subcellular location">
    <subcellularLocation>
        <location evidence="1">Cell inner membrane</location>
        <topology evidence="1">Multi-pass membrane protein</topology>
    </subcellularLocation>
</comment>
<comment type="similarity">
    <text evidence="1">Belongs to the NhaA Na(+)/H(+) (TC 2.A.33) antiporter family.</text>
</comment>
<comment type="sequence caution" evidence="2">
    <conflict type="erroneous initiation">
        <sequence resource="EMBL-CDS" id="ABV53154"/>
    </conflict>
</comment>
<keyword id="KW-0050">Antiport</keyword>
<keyword id="KW-0997">Cell inner membrane</keyword>
<keyword id="KW-1003">Cell membrane</keyword>
<keyword id="KW-0406">Ion transport</keyword>
<keyword id="KW-0472">Membrane</keyword>
<keyword id="KW-0915">Sodium</keyword>
<keyword id="KW-0739">Sodium transport</keyword>
<keyword id="KW-0812">Transmembrane</keyword>
<keyword id="KW-1133">Transmembrane helix</keyword>
<keyword id="KW-0813">Transport</keyword>